<evidence type="ECO:0000255" key="1">
    <source>
        <dbReference type="PROSITE-ProRule" id="PRU00176"/>
    </source>
</evidence>
<evidence type="ECO:0000256" key="2">
    <source>
        <dbReference type="SAM" id="MobiDB-lite"/>
    </source>
</evidence>
<evidence type="ECO:0000303" key="3">
    <source>
    </source>
</evidence>
<evidence type="ECO:0000305" key="4"/>
<evidence type="ECO:0000312" key="5">
    <source>
        <dbReference type="HGNC" id="HGNC:24661"/>
    </source>
</evidence>
<sequence length="774" mass="86886">MEPEREGTERHPRKVRESRQAPNKLVGAAEAMKAGWDLEESQPEAKKARLSTILFTDNCEVTHDQLCELLKYAVLGKSNVPKPSWCQLFHQNHLNNVVVFVLQGMSQLHFYRFYLEFGCLRKAFRHKFRLPPPSSDFLADVVGLQTEQRAGDLPKTMEGPLPSNAKAAINLQDDPIIQKYGSKKVGLTRCLLTKEEMRTFHFPLQGFPDCENFLLTKCNGSIADNSPLFGLDCEMCLTSKGRELTRISLVAEGGCCVMDELVKPENKILDYLTSFSGITKKILNPVTTKLKDVQRQLKALLPPDAVLVGHSLDLDLRALKMIHPYVIDTSLLYVREQGRRFKLKFLAKVILGKDIQCPDRLGHDATEDARTILELARYFLKHGPKKIAELNLEALANHQEIQAAGQEPKNTAEVLQHPNTSVLECLDSVGQKLLFLTRETDAGELPSSRNCQTIKCLSNKEVLEQARVEIPLFPFSIVQFSFKAFSPVLTEEMNKRMRIKWTEISTVYAGPFSKNCNLRALKRLFKSFGPVQSMTFVLETRQPHLCIQYEVLEAAQLAIESLDGILVDGICIKVQRPVTELTLDCDTLVNELEGDSENQGSIYLSGVSETFKEQLLQEPRLFLGLEAVILPKDLKSGKQKKYCFLKFKSFGSAQQALNILTGKDWKLKGRHALTPRHLHAWLRGLPPESTRLPGLRVVPPPFEQEALQTLKLDHPKIAAWRWSRKIGKLYNSLCPGTLCLILLPGTKSTHGSLSGLGLMGIKEEEESAGPGLCS</sequence>
<comment type="alternative products">
    <event type="alternative splicing"/>
    <isoform>
        <id>Q96IC2-1</id>
        <name>1</name>
        <sequence type="displayed"/>
    </isoform>
    <isoform>
        <id>Q96IC2-2</id>
        <name>2</name>
        <sequence type="described" ref="VSP_025443"/>
    </isoform>
</comment>
<comment type="sequence caution" evidence="4">
    <conflict type="erroneous gene model prediction">
        <sequence resource="EMBL-CDS" id="AAC31668"/>
    </conflict>
</comment>
<organism>
    <name type="scientific">Homo sapiens</name>
    <name type="common">Human</name>
    <dbReference type="NCBI Taxonomy" id="9606"/>
    <lineage>
        <taxon>Eukaryota</taxon>
        <taxon>Metazoa</taxon>
        <taxon>Chordata</taxon>
        <taxon>Craniata</taxon>
        <taxon>Vertebrata</taxon>
        <taxon>Euteleostomi</taxon>
        <taxon>Mammalia</taxon>
        <taxon>Eutheria</taxon>
        <taxon>Euarchontoglires</taxon>
        <taxon>Primates</taxon>
        <taxon>Haplorrhini</taxon>
        <taxon>Catarrhini</taxon>
        <taxon>Hominidae</taxon>
        <taxon>Homo</taxon>
    </lineage>
</organism>
<protein>
    <recommendedName>
        <fullName evidence="5">RNA exonuclease 5</fullName>
        <ecNumber>3.1.-.-</ecNumber>
    </recommendedName>
    <alternativeName>
        <fullName>Exonuclease NEF-sp</fullName>
    </alternativeName>
</protein>
<proteinExistence type="evidence at protein level"/>
<reference key="1">
    <citation type="submission" date="2000-12" db="EMBL/GenBank/DDBJ databases">
        <title>Cloning of a novel exonuclease factor gene related to testis development in humans.</title>
        <authorList>
            <person name="Li J.M."/>
            <person name="Sha J.H."/>
            <person name="Zhou Z.M."/>
        </authorList>
    </citation>
    <scope>NUCLEOTIDE SEQUENCE [MRNA] (ISOFORM 1)</scope>
    <source>
        <tissue>Testis</tissue>
    </source>
</reference>
<reference key="2">
    <citation type="journal article" date="2001" name="Genome Res.">
        <title>Towards a catalog of human genes and proteins: sequencing and analysis of 500 novel complete protein coding human cDNAs.</title>
        <authorList>
            <person name="Wiemann S."/>
            <person name="Weil B."/>
            <person name="Wellenreuther R."/>
            <person name="Gassenhuber J."/>
            <person name="Glassl S."/>
            <person name="Ansorge W."/>
            <person name="Boecher M."/>
            <person name="Bloecker H."/>
            <person name="Bauersachs S."/>
            <person name="Blum H."/>
            <person name="Lauber J."/>
            <person name="Duesterhoeft A."/>
            <person name="Beyer A."/>
            <person name="Koehrer K."/>
            <person name="Strack N."/>
            <person name="Mewes H.-W."/>
            <person name="Ottenwaelder B."/>
            <person name="Obermaier B."/>
            <person name="Tampe J."/>
            <person name="Heubner D."/>
            <person name="Wambutt R."/>
            <person name="Korn B."/>
            <person name="Klein M."/>
            <person name="Poustka A."/>
        </authorList>
    </citation>
    <scope>NUCLEOTIDE SEQUENCE [LARGE SCALE MRNA] (ISOFORM 2)</scope>
    <source>
        <tissue>Testis</tissue>
    </source>
</reference>
<reference key="3">
    <citation type="journal article" date="2004" name="Nat. Genet.">
        <title>Complete sequencing and characterization of 21,243 full-length human cDNAs.</title>
        <authorList>
            <person name="Ota T."/>
            <person name="Suzuki Y."/>
            <person name="Nishikawa T."/>
            <person name="Otsuki T."/>
            <person name="Sugiyama T."/>
            <person name="Irie R."/>
            <person name="Wakamatsu A."/>
            <person name="Hayashi K."/>
            <person name="Sato H."/>
            <person name="Nagai K."/>
            <person name="Kimura K."/>
            <person name="Makita H."/>
            <person name="Sekine M."/>
            <person name="Obayashi M."/>
            <person name="Nishi T."/>
            <person name="Shibahara T."/>
            <person name="Tanaka T."/>
            <person name="Ishii S."/>
            <person name="Yamamoto J."/>
            <person name="Saito K."/>
            <person name="Kawai Y."/>
            <person name="Isono Y."/>
            <person name="Nakamura Y."/>
            <person name="Nagahari K."/>
            <person name="Murakami K."/>
            <person name="Yasuda T."/>
            <person name="Iwayanagi T."/>
            <person name="Wagatsuma M."/>
            <person name="Shiratori A."/>
            <person name="Sudo H."/>
            <person name="Hosoiri T."/>
            <person name="Kaku Y."/>
            <person name="Kodaira H."/>
            <person name="Kondo H."/>
            <person name="Sugawara M."/>
            <person name="Takahashi M."/>
            <person name="Kanda K."/>
            <person name="Yokoi T."/>
            <person name="Furuya T."/>
            <person name="Kikkawa E."/>
            <person name="Omura Y."/>
            <person name="Abe K."/>
            <person name="Kamihara K."/>
            <person name="Katsuta N."/>
            <person name="Sato K."/>
            <person name="Tanikawa M."/>
            <person name="Yamazaki M."/>
            <person name="Ninomiya K."/>
            <person name="Ishibashi T."/>
            <person name="Yamashita H."/>
            <person name="Murakawa K."/>
            <person name="Fujimori K."/>
            <person name="Tanai H."/>
            <person name="Kimata M."/>
            <person name="Watanabe M."/>
            <person name="Hiraoka S."/>
            <person name="Chiba Y."/>
            <person name="Ishida S."/>
            <person name="Ono Y."/>
            <person name="Takiguchi S."/>
            <person name="Watanabe S."/>
            <person name="Yosida M."/>
            <person name="Hotuta T."/>
            <person name="Kusano J."/>
            <person name="Kanehori K."/>
            <person name="Takahashi-Fujii A."/>
            <person name="Hara H."/>
            <person name="Tanase T.-O."/>
            <person name="Nomura Y."/>
            <person name="Togiya S."/>
            <person name="Komai F."/>
            <person name="Hara R."/>
            <person name="Takeuchi K."/>
            <person name="Arita M."/>
            <person name="Imose N."/>
            <person name="Musashino K."/>
            <person name="Yuuki H."/>
            <person name="Oshima A."/>
            <person name="Sasaki N."/>
            <person name="Aotsuka S."/>
            <person name="Yoshikawa Y."/>
            <person name="Matsunawa H."/>
            <person name="Ichihara T."/>
            <person name="Shiohata N."/>
            <person name="Sano S."/>
            <person name="Moriya S."/>
            <person name="Momiyama H."/>
            <person name="Satoh N."/>
            <person name="Takami S."/>
            <person name="Terashima Y."/>
            <person name="Suzuki O."/>
            <person name="Nakagawa S."/>
            <person name="Senoh A."/>
            <person name="Mizoguchi H."/>
            <person name="Goto Y."/>
            <person name="Shimizu F."/>
            <person name="Wakebe H."/>
            <person name="Hishigaki H."/>
            <person name="Watanabe T."/>
            <person name="Sugiyama A."/>
            <person name="Takemoto M."/>
            <person name="Kawakami B."/>
            <person name="Yamazaki M."/>
            <person name="Watanabe K."/>
            <person name="Kumagai A."/>
            <person name="Itakura S."/>
            <person name="Fukuzumi Y."/>
            <person name="Fujimori Y."/>
            <person name="Komiyama M."/>
            <person name="Tashiro H."/>
            <person name="Tanigami A."/>
            <person name="Fujiwara T."/>
            <person name="Ono T."/>
            <person name="Yamada K."/>
            <person name="Fujii Y."/>
            <person name="Ozaki K."/>
            <person name="Hirao M."/>
            <person name="Ohmori Y."/>
            <person name="Kawabata A."/>
            <person name="Hikiji T."/>
            <person name="Kobatake N."/>
            <person name="Inagaki H."/>
            <person name="Ikema Y."/>
            <person name="Okamoto S."/>
            <person name="Okitani R."/>
            <person name="Kawakami T."/>
            <person name="Noguchi S."/>
            <person name="Itoh T."/>
            <person name="Shigeta K."/>
            <person name="Senba T."/>
            <person name="Matsumura K."/>
            <person name="Nakajima Y."/>
            <person name="Mizuno T."/>
            <person name="Morinaga M."/>
            <person name="Sasaki M."/>
            <person name="Togashi T."/>
            <person name="Oyama M."/>
            <person name="Hata H."/>
            <person name="Watanabe M."/>
            <person name="Komatsu T."/>
            <person name="Mizushima-Sugano J."/>
            <person name="Satoh T."/>
            <person name="Shirai Y."/>
            <person name="Takahashi Y."/>
            <person name="Nakagawa K."/>
            <person name="Okumura K."/>
            <person name="Nagase T."/>
            <person name="Nomura N."/>
            <person name="Kikuchi H."/>
            <person name="Masuho Y."/>
            <person name="Yamashita R."/>
            <person name="Nakai K."/>
            <person name="Yada T."/>
            <person name="Nakamura Y."/>
            <person name="Ohara O."/>
            <person name="Isogai T."/>
            <person name="Sugano S."/>
        </authorList>
    </citation>
    <scope>NUCLEOTIDE SEQUENCE [LARGE SCALE MRNA] (ISOFORM 1)</scope>
    <source>
        <tissue>Testis</tissue>
    </source>
</reference>
<reference key="4">
    <citation type="journal article" date="1999" name="Genomics">
        <title>Genome duplications and other features in 12 Mb of DNA sequence from human chromosome 16p and 16q.</title>
        <authorList>
            <person name="Loftus B.J."/>
            <person name="Kim U.-J."/>
            <person name="Sneddon V.P."/>
            <person name="Kalush F."/>
            <person name="Brandon R."/>
            <person name="Fuhrmann J."/>
            <person name="Mason T."/>
            <person name="Crosby M.L."/>
            <person name="Barnstead M."/>
            <person name="Cronin L."/>
            <person name="Mays A.D."/>
            <person name="Cao Y."/>
            <person name="Xu R.X."/>
            <person name="Kang H.-L."/>
            <person name="Mitchell S."/>
            <person name="Eichler E.E."/>
            <person name="Harris P.C."/>
            <person name="Venter J.C."/>
            <person name="Adams M.D."/>
        </authorList>
    </citation>
    <scope>NUCLEOTIDE SEQUENCE [LARGE SCALE GENOMIC DNA]</scope>
</reference>
<reference key="5">
    <citation type="submission" date="2005-07" db="EMBL/GenBank/DDBJ databases">
        <authorList>
            <person name="Mural R.J."/>
            <person name="Istrail S."/>
            <person name="Sutton G.G."/>
            <person name="Florea L."/>
            <person name="Halpern A.L."/>
            <person name="Mobarry C.M."/>
            <person name="Lippert R."/>
            <person name="Walenz B."/>
            <person name="Shatkay H."/>
            <person name="Dew I."/>
            <person name="Miller J.R."/>
            <person name="Flanigan M.J."/>
            <person name="Edwards N.J."/>
            <person name="Bolanos R."/>
            <person name="Fasulo D."/>
            <person name="Halldorsson B.V."/>
            <person name="Hannenhalli S."/>
            <person name="Turner R."/>
            <person name="Yooseph S."/>
            <person name="Lu F."/>
            <person name="Nusskern D.R."/>
            <person name="Shue B.C."/>
            <person name="Zheng X.H."/>
            <person name="Zhong F."/>
            <person name="Delcher A.L."/>
            <person name="Huson D.H."/>
            <person name="Kravitz S.A."/>
            <person name="Mouchard L."/>
            <person name="Reinert K."/>
            <person name="Remington K.A."/>
            <person name="Clark A.G."/>
            <person name="Waterman M.S."/>
            <person name="Eichler E.E."/>
            <person name="Adams M.D."/>
            <person name="Hunkapiller M.W."/>
            <person name="Myers E.W."/>
            <person name="Venter J.C."/>
        </authorList>
    </citation>
    <scope>NUCLEOTIDE SEQUENCE [LARGE SCALE GENOMIC DNA]</scope>
</reference>
<reference key="6">
    <citation type="journal article" date="2004" name="Genome Res.">
        <title>The status, quality, and expansion of the NIH full-length cDNA project: the Mammalian Gene Collection (MGC).</title>
        <authorList>
            <consortium name="The MGC Project Team"/>
        </authorList>
    </citation>
    <scope>NUCLEOTIDE SEQUENCE [LARGE SCALE MRNA] (ISOFORM 1)</scope>
    <source>
        <tissue>Lung</tissue>
        <tissue>Testis</tissue>
    </source>
</reference>
<reference key="7">
    <citation type="journal article" date="2007" name="BMC Genomics">
        <title>The full-ORF clone resource of the German cDNA consortium.</title>
        <authorList>
            <person name="Bechtel S."/>
            <person name="Rosenfelder H."/>
            <person name="Duda A."/>
            <person name="Schmidt C.P."/>
            <person name="Ernst U."/>
            <person name="Wellenreuther R."/>
            <person name="Mehrle A."/>
            <person name="Schuster C."/>
            <person name="Bahr A."/>
            <person name="Bloecker H."/>
            <person name="Heubner D."/>
            <person name="Hoerlein A."/>
            <person name="Michel G."/>
            <person name="Wedler H."/>
            <person name="Koehrer K."/>
            <person name="Ottenwaelder B."/>
            <person name="Poustka A."/>
            <person name="Wiemann S."/>
            <person name="Schupp I."/>
        </authorList>
    </citation>
    <scope>NUCLEOTIDE SEQUENCE [LARGE SCALE MRNA] OF 416-774 (ISOFORM 1)</scope>
    <source>
        <tissue>Testis</tissue>
    </source>
</reference>
<dbReference type="EC" id="3.1.-.-"/>
<dbReference type="EMBL" id="AF332193">
    <property type="protein sequence ID" value="AAK17192.1"/>
    <property type="molecule type" value="mRNA"/>
</dbReference>
<dbReference type="EMBL" id="AL136763">
    <property type="protein sequence ID" value="CAB66697.1"/>
    <property type="molecule type" value="mRNA"/>
</dbReference>
<dbReference type="EMBL" id="AK057254">
    <property type="status" value="NOT_ANNOTATED_CDS"/>
    <property type="molecule type" value="mRNA"/>
</dbReference>
<dbReference type="EMBL" id="AK314458">
    <property type="protein sequence ID" value="BAG37066.1"/>
    <property type="molecule type" value="mRNA"/>
</dbReference>
<dbReference type="EMBL" id="AC004381">
    <property type="protein sequence ID" value="AAC31668.1"/>
    <property type="status" value="ALT_SEQ"/>
    <property type="molecule type" value="Genomic_DNA"/>
</dbReference>
<dbReference type="EMBL" id="CH471228">
    <property type="protein sequence ID" value="EAW66838.1"/>
    <property type="molecule type" value="Genomic_DNA"/>
</dbReference>
<dbReference type="EMBL" id="BC007646">
    <property type="protein sequence ID" value="AAH07646.1"/>
    <property type="molecule type" value="mRNA"/>
</dbReference>
<dbReference type="EMBL" id="BC068503">
    <property type="protein sequence ID" value="AAH68503.1"/>
    <property type="molecule type" value="mRNA"/>
</dbReference>
<dbReference type="EMBL" id="AL162035">
    <property type="protein sequence ID" value="CAB82386.1"/>
    <property type="molecule type" value="mRNA"/>
</dbReference>
<dbReference type="CCDS" id="CCDS10591.1">
    <molecule id="Q96IC2-1"/>
</dbReference>
<dbReference type="CCDS" id="CCDS45437.1">
    <molecule id="Q96IC2-2"/>
</dbReference>
<dbReference type="PIR" id="T47187">
    <property type="entry name" value="T47187"/>
</dbReference>
<dbReference type="RefSeq" id="NP_001138396.1">
    <molecule id="Q96IC2-2"/>
    <property type="nucleotide sequence ID" value="NM_001144924.2"/>
</dbReference>
<dbReference type="RefSeq" id="NP_001185982.1">
    <molecule id="Q96IC2-1"/>
    <property type="nucleotide sequence ID" value="NM_001199053.2"/>
</dbReference>
<dbReference type="RefSeq" id="NP_112203.2">
    <molecule id="Q96IC2-1"/>
    <property type="nucleotide sequence ID" value="NM_030941.3"/>
</dbReference>
<dbReference type="RefSeq" id="XP_005255661.1">
    <molecule id="Q96IC2-1"/>
    <property type="nucleotide sequence ID" value="XM_005255604.3"/>
</dbReference>
<dbReference type="RefSeq" id="XP_011544265.1">
    <molecule id="Q96IC2-1"/>
    <property type="nucleotide sequence ID" value="XM_011545963.3"/>
</dbReference>
<dbReference type="RefSeq" id="XP_016879228.1">
    <molecule id="Q96IC2-2"/>
    <property type="nucleotide sequence ID" value="XM_017023739.3"/>
</dbReference>
<dbReference type="RefSeq" id="XP_047290681.1">
    <molecule id="Q96IC2-1"/>
    <property type="nucleotide sequence ID" value="XM_047434725.1"/>
</dbReference>
<dbReference type="RefSeq" id="XP_047290682.1">
    <molecule id="Q96IC2-2"/>
    <property type="nucleotide sequence ID" value="XM_047434726.1"/>
</dbReference>
<dbReference type="RefSeq" id="XP_054170037.1">
    <molecule id="Q96IC2-1"/>
    <property type="nucleotide sequence ID" value="XM_054314062.1"/>
</dbReference>
<dbReference type="RefSeq" id="XP_054170038.1">
    <molecule id="Q96IC2-1"/>
    <property type="nucleotide sequence ID" value="XM_054314063.1"/>
</dbReference>
<dbReference type="RefSeq" id="XP_054170039.1">
    <molecule id="Q96IC2-1"/>
    <property type="nucleotide sequence ID" value="XM_054314064.1"/>
</dbReference>
<dbReference type="RefSeq" id="XP_054170040.1">
    <molecule id="Q96IC2-2"/>
    <property type="nucleotide sequence ID" value="XM_054314065.1"/>
</dbReference>
<dbReference type="RefSeq" id="XP_054170041.1">
    <molecule id="Q96IC2-2"/>
    <property type="nucleotide sequence ID" value="XM_054314066.1"/>
</dbReference>
<dbReference type="SMR" id="Q96IC2"/>
<dbReference type="BioGRID" id="123570">
    <property type="interactions" value="32"/>
</dbReference>
<dbReference type="FunCoup" id="Q96IC2">
    <property type="interactions" value="1353"/>
</dbReference>
<dbReference type="IntAct" id="Q96IC2">
    <property type="interactions" value="31"/>
</dbReference>
<dbReference type="STRING" id="9606.ENSP00000261377"/>
<dbReference type="GlyGen" id="Q96IC2">
    <property type="glycosylation" value="1 site, 1 O-linked glycan (1 site)"/>
</dbReference>
<dbReference type="iPTMnet" id="Q96IC2"/>
<dbReference type="PhosphoSitePlus" id="Q96IC2"/>
<dbReference type="SwissPalm" id="Q96IC2"/>
<dbReference type="BioMuta" id="REXO5"/>
<dbReference type="DMDM" id="74760869"/>
<dbReference type="jPOST" id="Q96IC2"/>
<dbReference type="MassIVE" id="Q96IC2"/>
<dbReference type="PaxDb" id="9606-ENSP00000261377"/>
<dbReference type="PeptideAtlas" id="Q96IC2"/>
<dbReference type="ProteomicsDB" id="76822">
    <molecule id="Q96IC2-1"/>
</dbReference>
<dbReference type="ProteomicsDB" id="76823">
    <molecule id="Q96IC2-2"/>
</dbReference>
<dbReference type="Pumba" id="Q96IC2"/>
<dbReference type="Antibodypedia" id="25622">
    <property type="antibodies" value="40 antibodies from 14 providers"/>
</dbReference>
<dbReference type="DNASU" id="81691"/>
<dbReference type="Ensembl" id="ENST00000261377.11">
    <molecule id="Q96IC2-1"/>
    <property type="protein sequence ID" value="ENSP00000261377.6"/>
    <property type="gene ID" value="ENSG00000005189.20"/>
</dbReference>
<dbReference type="Ensembl" id="ENST00000348433.10">
    <molecule id="Q96IC2-2"/>
    <property type="protein sequence ID" value="ENSP00000261378.8"/>
    <property type="gene ID" value="ENSG00000005189.20"/>
</dbReference>
<dbReference type="Ensembl" id="ENST00000564274.5">
    <molecule id="Q96IC2-1"/>
    <property type="protein sequence ID" value="ENSP00000457616.1"/>
    <property type="gene ID" value="ENSG00000005189.20"/>
</dbReference>
<dbReference type="GeneID" id="81691"/>
<dbReference type="KEGG" id="hsa:81691"/>
<dbReference type="MANE-Select" id="ENST00000261377.11">
    <property type="protein sequence ID" value="ENSP00000261377.6"/>
    <property type="RefSeq nucleotide sequence ID" value="NM_030941.3"/>
    <property type="RefSeq protein sequence ID" value="NP_112203.2"/>
</dbReference>
<dbReference type="UCSC" id="uc002dhv.4">
    <molecule id="Q96IC2-1"/>
    <property type="organism name" value="human"/>
</dbReference>
<dbReference type="AGR" id="HGNC:24661"/>
<dbReference type="CTD" id="81691"/>
<dbReference type="GeneCards" id="REXO5"/>
<dbReference type="HGNC" id="HGNC:24661">
    <property type="gene designation" value="REXO5"/>
</dbReference>
<dbReference type="HPA" id="ENSG00000005189">
    <property type="expression patterns" value="Tissue enriched (testis)"/>
</dbReference>
<dbReference type="neXtProt" id="NX_Q96IC2"/>
<dbReference type="OpenTargets" id="ENSG00000005189"/>
<dbReference type="VEuPathDB" id="HostDB:ENSG00000005189"/>
<dbReference type="eggNOG" id="KOG2248">
    <property type="taxonomic scope" value="Eukaryota"/>
</dbReference>
<dbReference type="GeneTree" id="ENSGT00940000161162"/>
<dbReference type="HOGENOM" id="CLU_024781_0_0_1"/>
<dbReference type="InParanoid" id="Q96IC2"/>
<dbReference type="OMA" id="PHICIQY"/>
<dbReference type="OrthoDB" id="3996471at2759"/>
<dbReference type="PAN-GO" id="Q96IC2">
    <property type="GO annotations" value="2 GO annotations based on evolutionary models"/>
</dbReference>
<dbReference type="PhylomeDB" id="Q96IC2"/>
<dbReference type="PathwayCommons" id="Q96IC2"/>
<dbReference type="SignaLink" id="Q96IC2"/>
<dbReference type="BioGRID-ORCS" id="81691">
    <property type="hits" value="8 hits in 1011 CRISPR screens"/>
</dbReference>
<dbReference type="GeneWiki" id="LOC81691"/>
<dbReference type="GenomeRNAi" id="81691"/>
<dbReference type="Pharos" id="Q96IC2">
    <property type="development level" value="Tdark"/>
</dbReference>
<dbReference type="PRO" id="PR:Q96IC2"/>
<dbReference type="Proteomes" id="UP000005640">
    <property type="component" value="Chromosome 16"/>
</dbReference>
<dbReference type="RNAct" id="Q96IC2">
    <property type="molecule type" value="protein"/>
</dbReference>
<dbReference type="Bgee" id="ENSG00000005189">
    <property type="expression patterns" value="Expressed in left testis and 121 other cell types or tissues"/>
</dbReference>
<dbReference type="ExpressionAtlas" id="Q96IC2">
    <property type="expression patterns" value="baseline and differential"/>
</dbReference>
<dbReference type="GO" id="GO:0070062">
    <property type="term" value="C:extracellular exosome"/>
    <property type="evidence" value="ECO:0007005"/>
    <property type="project" value="UniProtKB"/>
</dbReference>
<dbReference type="GO" id="GO:0005730">
    <property type="term" value="C:nucleolus"/>
    <property type="evidence" value="ECO:0000314"/>
    <property type="project" value="LIFEdb"/>
</dbReference>
<dbReference type="GO" id="GO:0005634">
    <property type="term" value="C:nucleus"/>
    <property type="evidence" value="ECO:0000318"/>
    <property type="project" value="GO_Central"/>
</dbReference>
<dbReference type="GO" id="GO:0004527">
    <property type="term" value="F:exonuclease activity"/>
    <property type="evidence" value="ECO:0000318"/>
    <property type="project" value="GO_Central"/>
</dbReference>
<dbReference type="GO" id="GO:0003723">
    <property type="term" value="F:RNA binding"/>
    <property type="evidence" value="ECO:0007669"/>
    <property type="project" value="UniProtKB-KW"/>
</dbReference>
<dbReference type="GO" id="GO:0031125">
    <property type="term" value="P:rRNA 3'-end processing"/>
    <property type="evidence" value="ECO:0000318"/>
    <property type="project" value="GO_Central"/>
</dbReference>
<dbReference type="CDD" id="cd06145">
    <property type="entry name" value="REX1_like"/>
    <property type="match status" value="1"/>
</dbReference>
<dbReference type="FunFam" id="3.30.70.330:FF:000528">
    <property type="entry name" value="RNA exonuclease 5"/>
    <property type="match status" value="1"/>
</dbReference>
<dbReference type="FunFam" id="3.30.420.10:FF:000055">
    <property type="entry name" value="RNA exonuclease 5 isoform X1"/>
    <property type="match status" value="1"/>
</dbReference>
<dbReference type="FunFam" id="3.30.70.330:FF:000358">
    <property type="entry name" value="RNA exonuclease 5 isoform X1"/>
    <property type="match status" value="1"/>
</dbReference>
<dbReference type="Gene3D" id="3.30.70.330">
    <property type="match status" value="2"/>
</dbReference>
<dbReference type="Gene3D" id="3.30.420.10">
    <property type="entry name" value="Ribonuclease H-like superfamily/Ribonuclease H"/>
    <property type="match status" value="1"/>
</dbReference>
<dbReference type="InterPro" id="IPR013520">
    <property type="entry name" value="Exonuclease_RNaseT/DNA_pol3"/>
</dbReference>
<dbReference type="InterPro" id="IPR012677">
    <property type="entry name" value="Nucleotide-bd_a/b_plait_sf"/>
</dbReference>
<dbReference type="InterPro" id="IPR035979">
    <property type="entry name" value="RBD_domain_sf"/>
</dbReference>
<dbReference type="InterPro" id="IPR034922">
    <property type="entry name" value="REX1-like_exo"/>
</dbReference>
<dbReference type="InterPro" id="IPR047021">
    <property type="entry name" value="REXO1/3/4-like"/>
</dbReference>
<dbReference type="InterPro" id="IPR012337">
    <property type="entry name" value="RNaseH-like_sf"/>
</dbReference>
<dbReference type="InterPro" id="IPR036397">
    <property type="entry name" value="RNaseH_sf"/>
</dbReference>
<dbReference type="InterPro" id="IPR000504">
    <property type="entry name" value="RRM_dom"/>
</dbReference>
<dbReference type="PANTHER" id="PTHR12801:SF82">
    <property type="entry name" value="RNA EXONUCLEASE 5"/>
    <property type="match status" value="1"/>
</dbReference>
<dbReference type="PANTHER" id="PTHR12801">
    <property type="entry name" value="RNA EXONUCLEASE REXO1 / RECO3 FAMILY MEMBER-RELATED"/>
    <property type="match status" value="1"/>
</dbReference>
<dbReference type="Pfam" id="PF00929">
    <property type="entry name" value="RNase_T"/>
    <property type="match status" value="1"/>
</dbReference>
<dbReference type="Pfam" id="PF00076">
    <property type="entry name" value="RRM_1"/>
    <property type="match status" value="1"/>
</dbReference>
<dbReference type="SMART" id="SM00479">
    <property type="entry name" value="EXOIII"/>
    <property type="match status" value="1"/>
</dbReference>
<dbReference type="SMART" id="SM00360">
    <property type="entry name" value="RRM"/>
    <property type="match status" value="2"/>
</dbReference>
<dbReference type="SUPFAM" id="SSF53098">
    <property type="entry name" value="Ribonuclease H-like"/>
    <property type="match status" value="1"/>
</dbReference>
<dbReference type="SUPFAM" id="SSF54928">
    <property type="entry name" value="RNA-binding domain, RBD"/>
    <property type="match status" value="1"/>
</dbReference>
<dbReference type="PROSITE" id="PS50102">
    <property type="entry name" value="RRM"/>
    <property type="match status" value="2"/>
</dbReference>
<accession>Q96IC2</accession>
<accession>B2RB19</accession>
<accession>O60364</accession>
<accession>Q96MB1</accession>
<accession>Q9BXH9</accession>
<accession>Q9H0K2</accession>
<accession>Q9NSM2</accession>
<gene>
    <name evidence="5" type="primary">REXO5</name>
    <name type="ORF">44M2.3</name>
</gene>
<feature type="chain" id="PRO_0000287345" description="RNA exonuclease 5">
    <location>
        <begin position="1"/>
        <end position="774"/>
    </location>
</feature>
<feature type="domain" description="Exonuclease">
    <location>
        <begin position="228"/>
        <end position="376"/>
    </location>
</feature>
<feature type="domain" description="RRM 1" evidence="1">
    <location>
        <begin position="505"/>
        <end position="579"/>
    </location>
</feature>
<feature type="domain" description="RRM 2" evidence="1">
    <location>
        <begin position="600"/>
        <end position="679"/>
    </location>
</feature>
<feature type="region of interest" description="Disordered" evidence="2">
    <location>
        <begin position="1"/>
        <end position="22"/>
    </location>
</feature>
<feature type="compositionally biased region" description="Basic and acidic residues" evidence="2">
    <location>
        <begin position="1"/>
        <end position="19"/>
    </location>
</feature>
<feature type="splice variant" id="VSP_025443" description="In isoform 2." evidence="3">
    <location>
        <begin position="543"/>
        <end position="573"/>
    </location>
</feature>
<feature type="sequence conflict" description="In Ref. 1; AAK17192." evidence="4" ref="1">
    <original>S</original>
    <variation>G</variation>
    <location>
        <position position="18"/>
    </location>
</feature>
<feature type="sequence conflict" description="In Ref. 3; AK057254." evidence="4" ref="3">
    <original>F</original>
    <variation>S</variation>
    <location>
        <position position="213"/>
    </location>
</feature>
<feature type="sequence conflict" description="In Ref. 4; AAC31668." evidence="4" ref="4">
    <original>S</original>
    <variation>R</variation>
    <location>
        <position position="748"/>
    </location>
</feature>
<keyword id="KW-0025">Alternative splicing</keyword>
<keyword id="KW-0269">Exonuclease</keyword>
<keyword id="KW-0378">Hydrolase</keyword>
<keyword id="KW-0540">Nuclease</keyword>
<keyword id="KW-1267">Proteomics identification</keyword>
<keyword id="KW-1185">Reference proteome</keyword>
<keyword id="KW-0677">Repeat</keyword>
<keyword id="KW-0694">RNA-binding</keyword>
<name>REXO5_HUMAN</name>